<proteinExistence type="evidence at protein level"/>
<evidence type="ECO:0000250" key="1">
    <source>
        <dbReference type="UniProtKB" id="Q8N392"/>
    </source>
</evidence>
<evidence type="ECO:0000255" key="2">
    <source>
        <dbReference type="PROSITE-ProRule" id="PRU00172"/>
    </source>
</evidence>
<evidence type="ECO:0000256" key="3">
    <source>
        <dbReference type="SAM" id="MobiDB-lite"/>
    </source>
</evidence>
<evidence type="ECO:0000269" key="4">
    <source>
    </source>
</evidence>
<evidence type="ECO:0000305" key="5"/>
<evidence type="ECO:0000312" key="6">
    <source>
        <dbReference type="EMBL" id="AAH25004.1"/>
    </source>
</evidence>
<evidence type="ECO:0000312" key="7">
    <source>
        <dbReference type="EMBL" id="AAH30858.1"/>
    </source>
</evidence>
<evidence type="ECO:0000312" key="8">
    <source>
        <dbReference type="MGI" id="MGI:1921160"/>
    </source>
</evidence>
<evidence type="ECO:0007744" key="9">
    <source>
    </source>
</evidence>
<keyword id="KW-0963">Cytoplasm</keyword>
<keyword id="KW-0343">GTPase activation</keyword>
<keyword id="KW-0597">Phosphoprotein</keyword>
<keyword id="KW-1185">Reference proteome</keyword>
<sequence>MNWLSSSSGVVLTAYHPSGKDQVAGDSHVKGGDEATSSRRYGQYTINQEGSTKVPERPPFDRSSSQDSLDESMEAYWTELENIKRSNENRQEGQEAIVVKEPDEGELEEEWLKEAGLSNLFGESIDDPQESILFLSTLTRTQAAAVQKRVETVSQTLRKKNKQHHIRDVRDIFAQQREAQEKPPDDSDLRSVRTNENKGQGKDDQPSSGAVDSKEQISRVPEDTPASETDINLEVSFAEQAVNQKEFSKERTQKISSNDSLPSFRLPKDKTGTTRIGDLAPQDMKKVCSLSLIELTALYDVLGLEFKQQKAVKIKTRDSGLFGIPLTILLEQDQRKVPGTRIPLIFQKLISRIEEGSLETEGLLRIPGAAMRIKNLCQELEAKFYEGTFNWESVKQHDAASLLKLFLRELPQPLLSMEYLKAFQAVQNLPTRKEQLQALNLLVILLPDANRDTLKALLEFLQRVIDNKEKNKMTAGNVAMVMAPNLFMCHTLGLKSSEQREFEMAAGTANVMHLLIRYQKILWTIPKFIVIQVRKQNIENQKKERKAMKKLLKKMAYDREKHEKQDKTANGADVPQGVIRVQAPHLSKVSMAIQLTEELKASDVLARFLSQESGVAQTLKKGEVFLYEIGGNIGERCLDDDTHMKDLYQLNPNAEWVIKSKPV</sequence>
<reference key="1">
    <citation type="journal article" date="2004" name="Genome Res.">
        <title>The status, quality, and expansion of the NIH full-length cDNA project: the Mammalian Gene Collection (MGC).</title>
        <authorList>
            <consortium name="The MGC Project Team"/>
        </authorList>
    </citation>
    <scope>NUCLEOTIDE SEQUENCE [LARGE SCALE MRNA]</scope>
    <source>
        <strain evidence="7">FVB/N</strain>
        <tissue evidence="6">Kidney</tissue>
        <tissue evidence="7">Liver</tissue>
    </source>
</reference>
<reference key="2">
    <citation type="journal article" date="2005" name="Science">
        <title>The transcriptional landscape of the mammalian genome.</title>
        <authorList>
            <person name="Carninci P."/>
            <person name="Kasukawa T."/>
            <person name="Katayama S."/>
            <person name="Gough J."/>
            <person name="Frith M.C."/>
            <person name="Maeda N."/>
            <person name="Oyama R."/>
            <person name="Ravasi T."/>
            <person name="Lenhard B."/>
            <person name="Wells C."/>
            <person name="Kodzius R."/>
            <person name="Shimokawa K."/>
            <person name="Bajic V.B."/>
            <person name="Brenner S.E."/>
            <person name="Batalov S."/>
            <person name="Forrest A.R."/>
            <person name="Zavolan M."/>
            <person name="Davis M.J."/>
            <person name="Wilming L.G."/>
            <person name="Aidinis V."/>
            <person name="Allen J.E."/>
            <person name="Ambesi-Impiombato A."/>
            <person name="Apweiler R."/>
            <person name="Aturaliya R.N."/>
            <person name="Bailey T.L."/>
            <person name="Bansal M."/>
            <person name="Baxter L."/>
            <person name="Beisel K.W."/>
            <person name="Bersano T."/>
            <person name="Bono H."/>
            <person name="Chalk A.M."/>
            <person name="Chiu K.P."/>
            <person name="Choudhary V."/>
            <person name="Christoffels A."/>
            <person name="Clutterbuck D.R."/>
            <person name="Crowe M.L."/>
            <person name="Dalla E."/>
            <person name="Dalrymple B.P."/>
            <person name="de Bono B."/>
            <person name="Della Gatta G."/>
            <person name="di Bernardo D."/>
            <person name="Down T."/>
            <person name="Engstrom P."/>
            <person name="Fagiolini M."/>
            <person name="Faulkner G."/>
            <person name="Fletcher C.F."/>
            <person name="Fukushima T."/>
            <person name="Furuno M."/>
            <person name="Futaki S."/>
            <person name="Gariboldi M."/>
            <person name="Georgii-Hemming P."/>
            <person name="Gingeras T.R."/>
            <person name="Gojobori T."/>
            <person name="Green R.E."/>
            <person name="Gustincich S."/>
            <person name="Harbers M."/>
            <person name="Hayashi Y."/>
            <person name="Hensch T.K."/>
            <person name="Hirokawa N."/>
            <person name="Hill D."/>
            <person name="Huminiecki L."/>
            <person name="Iacono M."/>
            <person name="Ikeo K."/>
            <person name="Iwama A."/>
            <person name="Ishikawa T."/>
            <person name="Jakt M."/>
            <person name="Kanapin A."/>
            <person name="Katoh M."/>
            <person name="Kawasawa Y."/>
            <person name="Kelso J."/>
            <person name="Kitamura H."/>
            <person name="Kitano H."/>
            <person name="Kollias G."/>
            <person name="Krishnan S.P."/>
            <person name="Kruger A."/>
            <person name="Kummerfeld S.K."/>
            <person name="Kurochkin I.V."/>
            <person name="Lareau L.F."/>
            <person name="Lazarevic D."/>
            <person name="Lipovich L."/>
            <person name="Liu J."/>
            <person name="Liuni S."/>
            <person name="McWilliam S."/>
            <person name="Madan Babu M."/>
            <person name="Madera M."/>
            <person name="Marchionni L."/>
            <person name="Matsuda H."/>
            <person name="Matsuzawa S."/>
            <person name="Miki H."/>
            <person name="Mignone F."/>
            <person name="Miyake S."/>
            <person name="Morris K."/>
            <person name="Mottagui-Tabar S."/>
            <person name="Mulder N."/>
            <person name="Nakano N."/>
            <person name="Nakauchi H."/>
            <person name="Ng P."/>
            <person name="Nilsson R."/>
            <person name="Nishiguchi S."/>
            <person name="Nishikawa S."/>
            <person name="Nori F."/>
            <person name="Ohara O."/>
            <person name="Okazaki Y."/>
            <person name="Orlando V."/>
            <person name="Pang K.C."/>
            <person name="Pavan W.J."/>
            <person name="Pavesi G."/>
            <person name="Pesole G."/>
            <person name="Petrovsky N."/>
            <person name="Piazza S."/>
            <person name="Reed J."/>
            <person name="Reid J.F."/>
            <person name="Ring B.Z."/>
            <person name="Ringwald M."/>
            <person name="Rost B."/>
            <person name="Ruan Y."/>
            <person name="Salzberg S.L."/>
            <person name="Sandelin A."/>
            <person name="Schneider C."/>
            <person name="Schoenbach C."/>
            <person name="Sekiguchi K."/>
            <person name="Semple C.A."/>
            <person name="Seno S."/>
            <person name="Sessa L."/>
            <person name="Sheng Y."/>
            <person name="Shibata Y."/>
            <person name="Shimada H."/>
            <person name="Shimada K."/>
            <person name="Silva D."/>
            <person name="Sinclair B."/>
            <person name="Sperling S."/>
            <person name="Stupka E."/>
            <person name="Sugiura K."/>
            <person name="Sultana R."/>
            <person name="Takenaka Y."/>
            <person name="Taki K."/>
            <person name="Tammoja K."/>
            <person name="Tan S.L."/>
            <person name="Tang S."/>
            <person name="Taylor M.S."/>
            <person name="Tegner J."/>
            <person name="Teichmann S.A."/>
            <person name="Ueda H.R."/>
            <person name="van Nimwegen E."/>
            <person name="Verardo R."/>
            <person name="Wei C.L."/>
            <person name="Yagi K."/>
            <person name="Yamanishi H."/>
            <person name="Zabarovsky E."/>
            <person name="Zhu S."/>
            <person name="Zimmer A."/>
            <person name="Hide W."/>
            <person name="Bult C."/>
            <person name="Grimmond S.M."/>
            <person name="Teasdale R.D."/>
            <person name="Liu E.T."/>
            <person name="Brusic V."/>
            <person name="Quackenbush J."/>
            <person name="Wahlestedt C."/>
            <person name="Mattick J.S."/>
            <person name="Hume D.A."/>
            <person name="Kai C."/>
            <person name="Sasaki D."/>
            <person name="Tomaru Y."/>
            <person name="Fukuda S."/>
            <person name="Kanamori-Katayama M."/>
            <person name="Suzuki M."/>
            <person name="Aoki J."/>
            <person name="Arakawa T."/>
            <person name="Iida J."/>
            <person name="Imamura K."/>
            <person name="Itoh M."/>
            <person name="Kato T."/>
            <person name="Kawaji H."/>
            <person name="Kawagashira N."/>
            <person name="Kawashima T."/>
            <person name="Kojima M."/>
            <person name="Kondo S."/>
            <person name="Konno H."/>
            <person name="Nakano K."/>
            <person name="Ninomiya N."/>
            <person name="Nishio T."/>
            <person name="Okada M."/>
            <person name="Plessy C."/>
            <person name="Shibata K."/>
            <person name="Shiraki T."/>
            <person name="Suzuki S."/>
            <person name="Tagami M."/>
            <person name="Waki K."/>
            <person name="Watahiki A."/>
            <person name="Okamura-Oho Y."/>
            <person name="Suzuki H."/>
            <person name="Kawai J."/>
            <person name="Hayashizaki Y."/>
        </authorList>
    </citation>
    <scope>NUCLEOTIDE SEQUENCE [LARGE SCALE MRNA] OF 293-663</scope>
    <source>
        <strain>C57BL/6J</strain>
        <tissue>Muellerian duct</tissue>
    </source>
</reference>
<reference key="3">
    <citation type="journal article" date="2010" name="Cell">
        <title>A tissue-specific atlas of mouse protein phosphorylation and expression.</title>
        <authorList>
            <person name="Huttlin E.L."/>
            <person name="Jedrychowski M.P."/>
            <person name="Elias J.E."/>
            <person name="Goswami T."/>
            <person name="Rad R."/>
            <person name="Beausoleil S.A."/>
            <person name="Villen J."/>
            <person name="Haas W."/>
            <person name="Sowa M.E."/>
            <person name="Gygi S.P."/>
        </authorList>
    </citation>
    <scope>PHOSPHORYLATION [LARGE SCALE ANALYSIS] AT SER-65; SER-68 AND SER-260</scope>
    <scope>IDENTIFICATION BY MASS SPECTROMETRY [LARGE SCALE ANALYSIS]</scope>
    <source>
        <tissue>Brown adipose tissue</tissue>
        <tissue>Kidney</tissue>
        <tissue>Liver</tissue>
        <tissue>Lung</tissue>
        <tissue>Spleen</tissue>
        <tissue>Testis</tissue>
    </source>
</reference>
<reference key="4">
    <citation type="journal article" date="2011" name="Mol. Biol. Cell">
        <title>ARHGAP18, a GTPase-activating protein for RhoA, controls cell shape, spreading, and motility.</title>
        <authorList>
            <person name="Maeda M."/>
            <person name="Hasegawa H."/>
            <person name="Hyodo T."/>
            <person name="Ito S."/>
            <person name="Asano E."/>
            <person name="Yuang H."/>
            <person name="Funasaka K."/>
            <person name="Shimokata K."/>
            <person name="Hasegawa Y."/>
            <person name="Hamaguchi M."/>
            <person name="Senga T."/>
        </authorList>
    </citation>
    <scope>TISSUE SPECIFICITY</scope>
</reference>
<comment type="function">
    <text evidence="1">Rho GTPase activating protein that suppresses F-actin polymerization by inhibiting Rho. Rho GTPase activating proteins act by converting Rho-type GTPases to an inactive GDP-bound state. Plays a key role in tissue tension and 3D tissue shape by regulating cortical actomyosin network formation. Acts downstream of YAP1 and inhibits actin polymerization, which in turn reduces nuclear localization of YAP1. Regulates cell shape, spreading, and migration (By similarity).</text>
</comment>
<comment type="subunit">
    <text evidence="1">Interacts with MPHOSPH6.</text>
</comment>
<comment type="subcellular location">
    <subcellularLocation>
        <location evidence="1">Cytoplasm</location>
    </subcellularLocation>
</comment>
<comment type="tissue specificity">
    <text evidence="4">Widely expressed: expressed in most organs, except small intestine.</text>
</comment>
<organism>
    <name type="scientific">Mus musculus</name>
    <name type="common">Mouse</name>
    <dbReference type="NCBI Taxonomy" id="10090"/>
    <lineage>
        <taxon>Eukaryota</taxon>
        <taxon>Metazoa</taxon>
        <taxon>Chordata</taxon>
        <taxon>Craniata</taxon>
        <taxon>Vertebrata</taxon>
        <taxon>Euteleostomi</taxon>
        <taxon>Mammalia</taxon>
        <taxon>Eutheria</taxon>
        <taxon>Euarchontoglires</taxon>
        <taxon>Glires</taxon>
        <taxon>Rodentia</taxon>
        <taxon>Myomorpha</taxon>
        <taxon>Muroidea</taxon>
        <taxon>Muridae</taxon>
        <taxon>Murinae</taxon>
        <taxon>Mus</taxon>
        <taxon>Mus</taxon>
    </lineage>
</organism>
<feature type="chain" id="PRO_0000245790" description="Rho GTPase-activating protein 18">
    <location>
        <begin position="1"/>
        <end position="663"/>
    </location>
</feature>
<feature type="domain" description="Rho-GAP" evidence="2">
    <location>
        <begin position="324"/>
        <end position="523"/>
    </location>
</feature>
<feature type="region of interest" description="Disordered" evidence="3">
    <location>
        <begin position="14"/>
        <end position="73"/>
    </location>
</feature>
<feature type="region of interest" description="Disordered" evidence="3">
    <location>
        <begin position="85"/>
        <end position="106"/>
    </location>
</feature>
<feature type="region of interest" description="Disordered" evidence="3">
    <location>
        <begin position="173"/>
        <end position="228"/>
    </location>
</feature>
<feature type="region of interest" description="Disordered" evidence="3">
    <location>
        <begin position="245"/>
        <end position="277"/>
    </location>
</feature>
<feature type="compositionally biased region" description="Basic and acidic residues" evidence="3">
    <location>
        <begin position="27"/>
        <end position="37"/>
    </location>
</feature>
<feature type="compositionally biased region" description="Polar residues" evidence="3">
    <location>
        <begin position="38"/>
        <end position="51"/>
    </location>
</feature>
<feature type="compositionally biased region" description="Basic and acidic residues" evidence="3">
    <location>
        <begin position="85"/>
        <end position="102"/>
    </location>
</feature>
<feature type="compositionally biased region" description="Basic and acidic residues" evidence="3">
    <location>
        <begin position="178"/>
        <end position="205"/>
    </location>
</feature>
<feature type="compositionally biased region" description="Basic and acidic residues" evidence="3">
    <location>
        <begin position="212"/>
        <end position="222"/>
    </location>
</feature>
<feature type="site" description="Arginine finger; crucial for GTP hydrolysis by stabilizing the transition state" evidence="2">
    <location>
        <position position="365"/>
    </location>
</feature>
<feature type="modified residue" description="Phosphoserine" evidence="9">
    <location>
        <position position="65"/>
    </location>
</feature>
<feature type="modified residue" description="Phosphoserine" evidence="9">
    <location>
        <position position="68"/>
    </location>
</feature>
<feature type="modified residue" description="Phosphothreonine" evidence="1">
    <location>
        <position position="156"/>
    </location>
</feature>
<feature type="modified residue" description="Phosphoserine" evidence="9">
    <location>
        <position position="260"/>
    </location>
</feature>
<feature type="modified residue" description="Phosphoserine" evidence="1">
    <location>
        <position position="263"/>
    </location>
</feature>
<feature type="modified residue" description="Phosphoserine" evidence="1">
    <location>
        <position position="610"/>
    </location>
</feature>
<feature type="sequence conflict" description="In Ref. 2; BAC37322." evidence="5" ref="2">
    <original>I</original>
    <variation>F</variation>
    <location>
        <position position="293"/>
    </location>
</feature>
<feature type="sequence conflict" description="In Ref. 1; AAH25004." evidence="5" ref="1">
    <original>YQ</original>
    <variation>FN</variation>
    <location>
        <begin position="518"/>
        <end position="519"/>
    </location>
</feature>
<name>RHG18_MOUSE</name>
<accession>Q8K0Q5</accession>
<accession>Q8BP03</accession>
<accession>Q8R196</accession>
<gene>
    <name evidence="8" type="primary">Arhgap18</name>
</gene>
<dbReference type="EMBL" id="BC025004">
    <property type="protein sequence ID" value="AAH25004.1"/>
    <property type="molecule type" value="mRNA"/>
</dbReference>
<dbReference type="EMBL" id="BC030858">
    <property type="protein sequence ID" value="AAH30858.1"/>
    <property type="molecule type" value="mRNA"/>
</dbReference>
<dbReference type="EMBL" id="AK078522">
    <property type="protein sequence ID" value="BAC37322.1"/>
    <property type="molecule type" value="mRNA"/>
</dbReference>
<dbReference type="CCDS" id="CCDS23757.1"/>
<dbReference type="RefSeq" id="NP_789807.1">
    <property type="nucleotide sequence ID" value="NM_176837.2"/>
</dbReference>
<dbReference type="SMR" id="Q8K0Q5"/>
<dbReference type="BioGRID" id="216349">
    <property type="interactions" value="33"/>
</dbReference>
<dbReference type="FunCoup" id="Q8K0Q5">
    <property type="interactions" value="1489"/>
</dbReference>
<dbReference type="IntAct" id="Q8K0Q5">
    <property type="interactions" value="16"/>
</dbReference>
<dbReference type="MINT" id="Q8K0Q5"/>
<dbReference type="STRING" id="10090.ENSMUSP00000044834"/>
<dbReference type="iPTMnet" id="Q8K0Q5"/>
<dbReference type="PhosphoSitePlus" id="Q8K0Q5"/>
<dbReference type="CPTAC" id="non-CPTAC-4001"/>
<dbReference type="jPOST" id="Q8K0Q5"/>
<dbReference type="PaxDb" id="10090-ENSMUSP00000044834"/>
<dbReference type="PeptideAtlas" id="Q8K0Q5"/>
<dbReference type="ProteomicsDB" id="254873"/>
<dbReference type="Pumba" id="Q8K0Q5"/>
<dbReference type="Antibodypedia" id="46605">
    <property type="antibodies" value="181 antibodies from 30 providers"/>
</dbReference>
<dbReference type="DNASU" id="73910"/>
<dbReference type="Ensembl" id="ENSMUST00000039557.9">
    <property type="protein sequence ID" value="ENSMUSP00000044834.8"/>
    <property type="gene ID" value="ENSMUSG00000039031.17"/>
</dbReference>
<dbReference type="GeneID" id="73910"/>
<dbReference type="KEGG" id="mmu:73910"/>
<dbReference type="UCSC" id="uc007ese.1">
    <property type="organism name" value="mouse"/>
</dbReference>
<dbReference type="AGR" id="MGI:1921160"/>
<dbReference type="CTD" id="93663"/>
<dbReference type="MGI" id="MGI:1921160">
    <property type="gene designation" value="Arhgap18"/>
</dbReference>
<dbReference type="VEuPathDB" id="HostDB:ENSMUSG00000039031"/>
<dbReference type="eggNOG" id="KOG2200">
    <property type="taxonomic scope" value="Eukaryota"/>
</dbReference>
<dbReference type="GeneTree" id="ENSGT00940000157142"/>
<dbReference type="HOGENOM" id="CLU_023268_2_1_1"/>
<dbReference type="InParanoid" id="Q8K0Q5"/>
<dbReference type="OMA" id="QHNMESQ"/>
<dbReference type="OrthoDB" id="27680at2759"/>
<dbReference type="PhylomeDB" id="Q8K0Q5"/>
<dbReference type="TreeFam" id="TF314044"/>
<dbReference type="Reactome" id="R-MMU-8980692">
    <property type="pathway name" value="RHOA GTPase cycle"/>
</dbReference>
<dbReference type="Reactome" id="R-MMU-9013106">
    <property type="pathway name" value="RHOC GTPase cycle"/>
</dbReference>
<dbReference type="BioGRID-ORCS" id="73910">
    <property type="hits" value="0 hits in 76 CRISPR screens"/>
</dbReference>
<dbReference type="ChiTaRS" id="Arhgap18">
    <property type="organism name" value="mouse"/>
</dbReference>
<dbReference type="PRO" id="PR:Q8K0Q5"/>
<dbReference type="Proteomes" id="UP000000589">
    <property type="component" value="Chromosome 10"/>
</dbReference>
<dbReference type="RNAct" id="Q8K0Q5">
    <property type="molecule type" value="protein"/>
</dbReference>
<dbReference type="Bgee" id="ENSMUSG00000039031">
    <property type="expression patterns" value="Expressed in cumulus cell and 217 other cell types or tissues"/>
</dbReference>
<dbReference type="ExpressionAtlas" id="Q8K0Q5">
    <property type="expression patterns" value="baseline and differential"/>
</dbReference>
<dbReference type="GO" id="GO:0005881">
    <property type="term" value="C:cytoplasmic microtubule"/>
    <property type="evidence" value="ECO:0007669"/>
    <property type="project" value="Ensembl"/>
</dbReference>
<dbReference type="GO" id="GO:0005829">
    <property type="term" value="C:cytosol"/>
    <property type="evidence" value="ECO:0007669"/>
    <property type="project" value="Ensembl"/>
</dbReference>
<dbReference type="GO" id="GO:0016607">
    <property type="term" value="C:nuclear speck"/>
    <property type="evidence" value="ECO:0007669"/>
    <property type="project" value="Ensembl"/>
</dbReference>
<dbReference type="GO" id="GO:0005886">
    <property type="term" value="C:plasma membrane"/>
    <property type="evidence" value="ECO:0007669"/>
    <property type="project" value="Ensembl"/>
</dbReference>
<dbReference type="GO" id="GO:0001726">
    <property type="term" value="C:ruffle"/>
    <property type="evidence" value="ECO:0007669"/>
    <property type="project" value="Ensembl"/>
</dbReference>
<dbReference type="GO" id="GO:0005096">
    <property type="term" value="F:GTPase activator activity"/>
    <property type="evidence" value="ECO:0000314"/>
    <property type="project" value="MGI"/>
</dbReference>
<dbReference type="GO" id="GO:0030833">
    <property type="term" value="P:regulation of actin filament polymerization"/>
    <property type="evidence" value="ECO:0007669"/>
    <property type="project" value="Ensembl"/>
</dbReference>
<dbReference type="GO" id="GO:2000145">
    <property type="term" value="P:regulation of cell motility"/>
    <property type="evidence" value="ECO:0007669"/>
    <property type="project" value="Ensembl"/>
</dbReference>
<dbReference type="GO" id="GO:0008360">
    <property type="term" value="P:regulation of cell shape"/>
    <property type="evidence" value="ECO:0007669"/>
    <property type="project" value="Ensembl"/>
</dbReference>
<dbReference type="GO" id="GO:0051056">
    <property type="term" value="P:regulation of small GTPase mediated signal transduction"/>
    <property type="evidence" value="ECO:0007669"/>
    <property type="project" value="Ensembl"/>
</dbReference>
<dbReference type="GO" id="GO:0007264">
    <property type="term" value="P:small GTPase-mediated signal transduction"/>
    <property type="evidence" value="ECO:0007669"/>
    <property type="project" value="Ensembl"/>
</dbReference>
<dbReference type="CDD" id="cd04391">
    <property type="entry name" value="RhoGAP_ARHGAP18"/>
    <property type="match status" value="1"/>
</dbReference>
<dbReference type="FunFam" id="1.10.555.10:FF:000028">
    <property type="entry name" value="rho GTPase-activating protein 18 isoform X1"/>
    <property type="match status" value="1"/>
</dbReference>
<dbReference type="Gene3D" id="1.10.555.10">
    <property type="entry name" value="Rho GTPase activation protein"/>
    <property type="match status" value="1"/>
</dbReference>
<dbReference type="InterPro" id="IPR008936">
    <property type="entry name" value="Rho_GTPase_activation_prot"/>
</dbReference>
<dbReference type="InterPro" id="IPR000198">
    <property type="entry name" value="RhoGAP_dom"/>
</dbReference>
<dbReference type="PANTHER" id="PTHR14963">
    <property type="entry name" value="RHO GTPASE ACTIVATING PROTEIN 18,19-RELATED"/>
    <property type="match status" value="1"/>
</dbReference>
<dbReference type="PANTHER" id="PTHR14963:SF6">
    <property type="entry name" value="RHO GTPASE-ACTIVATING PROTEIN 18"/>
    <property type="match status" value="1"/>
</dbReference>
<dbReference type="Pfam" id="PF00620">
    <property type="entry name" value="RhoGAP"/>
    <property type="match status" value="1"/>
</dbReference>
<dbReference type="Pfam" id="PF25442">
    <property type="entry name" value="Ubiquitin_RHG40_C"/>
    <property type="match status" value="1"/>
</dbReference>
<dbReference type="SMART" id="SM00324">
    <property type="entry name" value="RhoGAP"/>
    <property type="match status" value="1"/>
</dbReference>
<dbReference type="SUPFAM" id="SSF48350">
    <property type="entry name" value="GTPase activation domain, GAP"/>
    <property type="match status" value="1"/>
</dbReference>
<dbReference type="PROSITE" id="PS50238">
    <property type="entry name" value="RHOGAP"/>
    <property type="match status" value="1"/>
</dbReference>
<protein>
    <recommendedName>
        <fullName>Rho GTPase-activating protein 18</fullName>
    </recommendedName>
    <alternativeName>
        <fullName>Rho-type GTPase-activating protein 18</fullName>
    </alternativeName>
</protein>